<name>RL9_XYLF2</name>
<dbReference type="EMBL" id="CP001011">
    <property type="protein sequence ID" value="ACB93448.1"/>
    <property type="molecule type" value="Genomic_DNA"/>
</dbReference>
<dbReference type="RefSeq" id="WP_004084632.1">
    <property type="nucleotide sequence ID" value="NC_010577.1"/>
</dbReference>
<dbReference type="SMR" id="B2I9S7"/>
<dbReference type="GeneID" id="93905804"/>
<dbReference type="KEGG" id="xfn:XfasM23_2050"/>
<dbReference type="HOGENOM" id="CLU_078938_4_1_6"/>
<dbReference type="Proteomes" id="UP000001698">
    <property type="component" value="Chromosome"/>
</dbReference>
<dbReference type="GO" id="GO:1990904">
    <property type="term" value="C:ribonucleoprotein complex"/>
    <property type="evidence" value="ECO:0007669"/>
    <property type="project" value="UniProtKB-KW"/>
</dbReference>
<dbReference type="GO" id="GO:0005840">
    <property type="term" value="C:ribosome"/>
    <property type="evidence" value="ECO:0007669"/>
    <property type="project" value="UniProtKB-KW"/>
</dbReference>
<dbReference type="GO" id="GO:0019843">
    <property type="term" value="F:rRNA binding"/>
    <property type="evidence" value="ECO:0007669"/>
    <property type="project" value="UniProtKB-UniRule"/>
</dbReference>
<dbReference type="GO" id="GO:0003735">
    <property type="term" value="F:structural constituent of ribosome"/>
    <property type="evidence" value="ECO:0007669"/>
    <property type="project" value="InterPro"/>
</dbReference>
<dbReference type="GO" id="GO:0006412">
    <property type="term" value="P:translation"/>
    <property type="evidence" value="ECO:0007669"/>
    <property type="project" value="UniProtKB-UniRule"/>
</dbReference>
<dbReference type="Gene3D" id="3.10.430.100">
    <property type="entry name" value="Ribosomal protein L9, C-terminal domain"/>
    <property type="match status" value="1"/>
</dbReference>
<dbReference type="Gene3D" id="3.40.5.10">
    <property type="entry name" value="Ribosomal protein L9, N-terminal domain"/>
    <property type="match status" value="1"/>
</dbReference>
<dbReference type="HAMAP" id="MF_00503">
    <property type="entry name" value="Ribosomal_bL9"/>
    <property type="match status" value="1"/>
</dbReference>
<dbReference type="InterPro" id="IPR000244">
    <property type="entry name" value="Ribosomal_bL9"/>
</dbReference>
<dbReference type="InterPro" id="IPR009027">
    <property type="entry name" value="Ribosomal_bL9/RNase_H1_N"/>
</dbReference>
<dbReference type="InterPro" id="IPR020594">
    <property type="entry name" value="Ribosomal_bL9_bac/chp"/>
</dbReference>
<dbReference type="InterPro" id="IPR020069">
    <property type="entry name" value="Ribosomal_bL9_C"/>
</dbReference>
<dbReference type="InterPro" id="IPR036791">
    <property type="entry name" value="Ribosomal_bL9_C_sf"/>
</dbReference>
<dbReference type="InterPro" id="IPR020070">
    <property type="entry name" value="Ribosomal_bL9_N"/>
</dbReference>
<dbReference type="InterPro" id="IPR036935">
    <property type="entry name" value="Ribosomal_bL9_N_sf"/>
</dbReference>
<dbReference type="NCBIfam" id="TIGR00158">
    <property type="entry name" value="L9"/>
    <property type="match status" value="1"/>
</dbReference>
<dbReference type="PANTHER" id="PTHR21368">
    <property type="entry name" value="50S RIBOSOMAL PROTEIN L9"/>
    <property type="match status" value="1"/>
</dbReference>
<dbReference type="Pfam" id="PF03948">
    <property type="entry name" value="Ribosomal_L9_C"/>
    <property type="match status" value="1"/>
</dbReference>
<dbReference type="Pfam" id="PF01281">
    <property type="entry name" value="Ribosomal_L9_N"/>
    <property type="match status" value="1"/>
</dbReference>
<dbReference type="SUPFAM" id="SSF55658">
    <property type="entry name" value="L9 N-domain-like"/>
    <property type="match status" value="1"/>
</dbReference>
<dbReference type="SUPFAM" id="SSF55653">
    <property type="entry name" value="Ribosomal protein L9 C-domain"/>
    <property type="match status" value="1"/>
</dbReference>
<dbReference type="PROSITE" id="PS00651">
    <property type="entry name" value="RIBOSOMAL_L9"/>
    <property type="match status" value="1"/>
</dbReference>
<gene>
    <name evidence="1" type="primary">rplI</name>
    <name type="ordered locus">XfasM23_2050</name>
</gene>
<feature type="chain" id="PRO_1000126997" description="Large ribosomal subunit protein bL9">
    <location>
        <begin position="1"/>
        <end position="149"/>
    </location>
</feature>
<reference key="1">
    <citation type="journal article" date="2010" name="J. Bacteriol.">
        <title>Whole genome sequences of two Xylella fastidiosa strains (M12 and M23) causing almond leaf scorch disease in California.</title>
        <authorList>
            <person name="Chen J."/>
            <person name="Xie G."/>
            <person name="Han S."/>
            <person name="Chertkov O."/>
            <person name="Sims D."/>
            <person name="Civerolo E.L."/>
        </authorList>
    </citation>
    <scope>NUCLEOTIDE SEQUENCE [LARGE SCALE GENOMIC DNA]</scope>
    <source>
        <strain>M23</strain>
    </source>
</reference>
<protein>
    <recommendedName>
        <fullName evidence="1">Large ribosomal subunit protein bL9</fullName>
    </recommendedName>
    <alternativeName>
        <fullName evidence="2">50S ribosomal protein L9</fullName>
    </alternativeName>
</protein>
<proteinExistence type="inferred from homology"/>
<sequence>MELILLQKVANLGALGDKVTVKPGYGRNFLLPNGVAVPATEANLAAFQAKRAEYEAKAKSELDQAQARAAKFEGASVTVSAHASTEGKLYGSVGARDIAEAFTAVGLPLEKKEVILGEGAFRLIGEYDVLLHLHADVESTVKVIVQGVP</sequence>
<accession>B2I9S7</accession>
<keyword id="KW-0687">Ribonucleoprotein</keyword>
<keyword id="KW-0689">Ribosomal protein</keyword>
<keyword id="KW-0694">RNA-binding</keyword>
<keyword id="KW-0699">rRNA-binding</keyword>
<organism>
    <name type="scientific">Xylella fastidiosa (strain M23)</name>
    <dbReference type="NCBI Taxonomy" id="405441"/>
    <lineage>
        <taxon>Bacteria</taxon>
        <taxon>Pseudomonadati</taxon>
        <taxon>Pseudomonadota</taxon>
        <taxon>Gammaproteobacteria</taxon>
        <taxon>Lysobacterales</taxon>
        <taxon>Lysobacteraceae</taxon>
        <taxon>Xylella</taxon>
    </lineage>
</organism>
<evidence type="ECO:0000255" key="1">
    <source>
        <dbReference type="HAMAP-Rule" id="MF_00503"/>
    </source>
</evidence>
<evidence type="ECO:0000305" key="2"/>
<comment type="function">
    <text evidence="1">Binds to the 23S rRNA.</text>
</comment>
<comment type="similarity">
    <text evidence="1">Belongs to the bacterial ribosomal protein bL9 family.</text>
</comment>